<proteinExistence type="inferred from homology"/>
<evidence type="ECO:0000255" key="1">
    <source>
        <dbReference type="HAMAP-Rule" id="MF_00253"/>
    </source>
</evidence>
<organism>
    <name type="scientific">Methanococcus maripaludis (strain C7 / ATCC BAA-1331)</name>
    <dbReference type="NCBI Taxonomy" id="426368"/>
    <lineage>
        <taxon>Archaea</taxon>
        <taxon>Methanobacteriati</taxon>
        <taxon>Methanobacteriota</taxon>
        <taxon>Methanomada group</taxon>
        <taxon>Methanococci</taxon>
        <taxon>Methanococcales</taxon>
        <taxon>Methanococcaceae</taxon>
        <taxon>Methanococcus</taxon>
    </lineage>
</organism>
<comment type="function">
    <text evidence="1">Catalyzes the attachment of glycine to tRNA(Gly).</text>
</comment>
<comment type="catalytic activity">
    <reaction evidence="1">
        <text>tRNA(Gly) + glycine + ATP = glycyl-tRNA(Gly) + AMP + diphosphate</text>
        <dbReference type="Rhea" id="RHEA:16013"/>
        <dbReference type="Rhea" id="RHEA-COMP:9664"/>
        <dbReference type="Rhea" id="RHEA-COMP:9683"/>
        <dbReference type="ChEBI" id="CHEBI:30616"/>
        <dbReference type="ChEBI" id="CHEBI:33019"/>
        <dbReference type="ChEBI" id="CHEBI:57305"/>
        <dbReference type="ChEBI" id="CHEBI:78442"/>
        <dbReference type="ChEBI" id="CHEBI:78522"/>
        <dbReference type="ChEBI" id="CHEBI:456215"/>
        <dbReference type="EC" id="6.1.1.14"/>
    </reaction>
</comment>
<comment type="subcellular location">
    <subcellularLocation>
        <location>Cytoplasm</location>
    </subcellularLocation>
</comment>
<comment type="similarity">
    <text evidence="1">Belongs to the class-II aminoacyl-tRNA synthetase family.</text>
</comment>
<feature type="chain" id="PRO_1000047378" description="Glycine--tRNA ligase">
    <location>
        <begin position="1"/>
        <end position="574"/>
    </location>
</feature>
<feature type="binding site" evidence="1">
    <location>
        <position position="96"/>
    </location>
    <ligand>
        <name>substrate</name>
    </ligand>
</feature>
<feature type="binding site" evidence="1">
    <location>
        <position position="162"/>
    </location>
    <ligand>
        <name>substrate</name>
    </ligand>
</feature>
<feature type="binding site" evidence="1">
    <location>
        <begin position="194"/>
        <end position="196"/>
    </location>
    <ligand>
        <name>ATP</name>
        <dbReference type="ChEBI" id="CHEBI:30616"/>
    </ligand>
</feature>
<feature type="binding site" evidence="1">
    <location>
        <begin position="204"/>
        <end position="209"/>
    </location>
    <ligand>
        <name>ATP</name>
        <dbReference type="ChEBI" id="CHEBI:30616"/>
    </ligand>
</feature>
<feature type="binding site" evidence="1">
    <location>
        <begin position="209"/>
        <end position="213"/>
    </location>
    <ligand>
        <name>substrate</name>
    </ligand>
</feature>
<feature type="binding site" evidence="1">
    <location>
        <begin position="327"/>
        <end position="328"/>
    </location>
    <ligand>
        <name>ATP</name>
        <dbReference type="ChEBI" id="CHEBI:30616"/>
    </ligand>
</feature>
<feature type="binding site" evidence="1">
    <location>
        <begin position="446"/>
        <end position="450"/>
    </location>
    <ligand>
        <name>substrate</name>
    </ligand>
</feature>
<feature type="binding site" evidence="1">
    <location>
        <begin position="450"/>
        <end position="453"/>
    </location>
    <ligand>
        <name>ATP</name>
        <dbReference type="ChEBI" id="CHEBI:30616"/>
    </ligand>
</feature>
<sequence>MDKYDKIIDLTKRRGFLWNSFEIYGGIAGFFDYGPLGAILKNNVINTWRKHYIVNEGFYEIDSPTVTPYEVLKASGHVENFTDPLVECKECLESFRADHIIEENVDVDTEGKTLQELQEMIEKNNIKCPKCGGEFKEVSTFNLMFATSIGPGGKRAAFMRPETAQGIFIQFKRISQFFRNKLPFGAVQIGKAYRNEISPRQGVIRLREFTQAEGEFFIDSRKKENFEKFESVKDMVLPLLPGKNQENESLSAEEKIVRMSLSDAVKNGVIAHEAIAYYVAVTKKFLMEIGIDESKLRFRQHLPNEMAHYAADCWDAELYTDRYGWIECVGIADRTNYDLLAHMKNSSEDLSVFVELDEDKEVEVYEIELNYKLVGRTFKGDAKILEESLKELNDKKMEELVEALETEGKYVLKTCKRDFEILKEYLTAKKVKKIVKGEKIIPHVIEPSYGIDRITYCVMEHAFKEEEDRTVMGFSNAVSPIKVGVFPLVNKEGMPEIAMDLKNKLRENGLIAEYDDSGAIGRRYMRMDEVGTPFCVTIDGETLTDRSVTIRERDSREQFRIPINEVVSYIKDKL</sequence>
<dbReference type="EC" id="6.1.1.14" evidence="1"/>
<dbReference type="EMBL" id="CP000745">
    <property type="protein sequence ID" value="ABR66277.1"/>
    <property type="molecule type" value="Genomic_DNA"/>
</dbReference>
<dbReference type="SMR" id="A6VIK1"/>
<dbReference type="STRING" id="426368.MmarC7_1214"/>
<dbReference type="KEGG" id="mmz:MmarC7_1214"/>
<dbReference type="eggNOG" id="arCOG00405">
    <property type="taxonomic scope" value="Archaea"/>
</dbReference>
<dbReference type="HOGENOM" id="CLU_015515_1_2_2"/>
<dbReference type="OrthoDB" id="6113at2157"/>
<dbReference type="GO" id="GO:0005737">
    <property type="term" value="C:cytoplasm"/>
    <property type="evidence" value="ECO:0007669"/>
    <property type="project" value="UniProtKB-SubCell"/>
</dbReference>
<dbReference type="GO" id="GO:0005524">
    <property type="term" value="F:ATP binding"/>
    <property type="evidence" value="ECO:0007669"/>
    <property type="project" value="UniProtKB-UniRule"/>
</dbReference>
<dbReference type="GO" id="GO:0004820">
    <property type="term" value="F:glycine-tRNA ligase activity"/>
    <property type="evidence" value="ECO:0000250"/>
    <property type="project" value="UniProtKB"/>
</dbReference>
<dbReference type="GO" id="GO:0046983">
    <property type="term" value="F:protein dimerization activity"/>
    <property type="evidence" value="ECO:0000250"/>
    <property type="project" value="UniProtKB"/>
</dbReference>
<dbReference type="GO" id="GO:0006426">
    <property type="term" value="P:glycyl-tRNA aminoacylation"/>
    <property type="evidence" value="ECO:0007669"/>
    <property type="project" value="UniProtKB-UniRule"/>
</dbReference>
<dbReference type="CDD" id="cd00774">
    <property type="entry name" value="GlyRS-like_core"/>
    <property type="match status" value="1"/>
</dbReference>
<dbReference type="CDD" id="cd00858">
    <property type="entry name" value="GlyRS_anticodon"/>
    <property type="match status" value="1"/>
</dbReference>
<dbReference type="FunFam" id="3.30.40.230:FF:000005">
    <property type="entry name" value="Glycine--tRNA ligase"/>
    <property type="match status" value="1"/>
</dbReference>
<dbReference type="FunFam" id="3.40.50.800:FF:000002">
    <property type="entry name" value="Glycine--tRNA ligase"/>
    <property type="match status" value="1"/>
</dbReference>
<dbReference type="FunFam" id="3.30.720.200:FF:000001">
    <property type="entry name" value="Glycine--tRNA ligase 2"/>
    <property type="match status" value="1"/>
</dbReference>
<dbReference type="Gene3D" id="3.30.40.230">
    <property type="match status" value="1"/>
</dbReference>
<dbReference type="Gene3D" id="3.30.720.200">
    <property type="match status" value="1"/>
</dbReference>
<dbReference type="Gene3D" id="3.40.50.800">
    <property type="entry name" value="Anticodon-binding domain"/>
    <property type="match status" value="1"/>
</dbReference>
<dbReference type="Gene3D" id="3.30.930.10">
    <property type="entry name" value="Bira Bifunctional Protein, Domain 2"/>
    <property type="match status" value="1"/>
</dbReference>
<dbReference type="HAMAP" id="MF_00253_A">
    <property type="entry name" value="Gly_tRNA_synth_A"/>
    <property type="match status" value="1"/>
</dbReference>
<dbReference type="InterPro" id="IPR002314">
    <property type="entry name" value="aa-tRNA-synt_IIb"/>
</dbReference>
<dbReference type="InterPro" id="IPR006195">
    <property type="entry name" value="aa-tRNA-synth_II"/>
</dbReference>
<dbReference type="InterPro" id="IPR045864">
    <property type="entry name" value="aa-tRNA-synth_II/BPL/LPL"/>
</dbReference>
<dbReference type="InterPro" id="IPR004154">
    <property type="entry name" value="Anticodon-bd"/>
</dbReference>
<dbReference type="InterPro" id="IPR036621">
    <property type="entry name" value="Anticodon-bd_dom_sf"/>
</dbReference>
<dbReference type="InterPro" id="IPR027031">
    <property type="entry name" value="Gly-tRNA_synthase/POLG2"/>
</dbReference>
<dbReference type="InterPro" id="IPR022960">
    <property type="entry name" value="Gly_tRNA_ligase_arc"/>
</dbReference>
<dbReference type="InterPro" id="IPR033731">
    <property type="entry name" value="GlyRS-like_core"/>
</dbReference>
<dbReference type="InterPro" id="IPR002315">
    <property type="entry name" value="tRNA-synt_gly"/>
</dbReference>
<dbReference type="NCBIfam" id="TIGR00389">
    <property type="entry name" value="glyS_dimeric"/>
    <property type="match status" value="1"/>
</dbReference>
<dbReference type="NCBIfam" id="NF003211">
    <property type="entry name" value="PRK04173.1"/>
    <property type="match status" value="1"/>
</dbReference>
<dbReference type="PANTHER" id="PTHR10745:SF0">
    <property type="entry name" value="GLYCINE--TRNA LIGASE"/>
    <property type="match status" value="1"/>
</dbReference>
<dbReference type="PANTHER" id="PTHR10745">
    <property type="entry name" value="GLYCYL-TRNA SYNTHETASE/DNA POLYMERASE SUBUNIT GAMMA-2"/>
    <property type="match status" value="1"/>
</dbReference>
<dbReference type="Pfam" id="PF03129">
    <property type="entry name" value="HGTP_anticodon"/>
    <property type="match status" value="1"/>
</dbReference>
<dbReference type="Pfam" id="PF00587">
    <property type="entry name" value="tRNA-synt_2b"/>
    <property type="match status" value="1"/>
</dbReference>
<dbReference type="PRINTS" id="PR01043">
    <property type="entry name" value="TRNASYNTHGLY"/>
</dbReference>
<dbReference type="SUPFAM" id="SSF52954">
    <property type="entry name" value="Class II aaRS ABD-related"/>
    <property type="match status" value="1"/>
</dbReference>
<dbReference type="SUPFAM" id="SSF55681">
    <property type="entry name" value="Class II aaRS and biotin synthetases"/>
    <property type="match status" value="1"/>
</dbReference>
<dbReference type="PROSITE" id="PS50862">
    <property type="entry name" value="AA_TRNA_LIGASE_II"/>
    <property type="match status" value="1"/>
</dbReference>
<protein>
    <recommendedName>
        <fullName evidence="1">Glycine--tRNA ligase</fullName>
        <ecNumber evidence="1">6.1.1.14</ecNumber>
    </recommendedName>
    <alternativeName>
        <fullName evidence="1">Glycyl-tRNA synthetase</fullName>
        <shortName evidence="1">GlyRS</shortName>
    </alternativeName>
</protein>
<gene>
    <name evidence="1" type="primary">glyS</name>
    <name type="ordered locus">MmarC7_1214</name>
</gene>
<name>SYG_METM7</name>
<reference key="1">
    <citation type="submission" date="2007-06" db="EMBL/GenBank/DDBJ databases">
        <title>Complete sequence of Methanococcus maripaludis C7.</title>
        <authorList>
            <consortium name="US DOE Joint Genome Institute"/>
            <person name="Copeland A."/>
            <person name="Lucas S."/>
            <person name="Lapidus A."/>
            <person name="Barry K."/>
            <person name="Glavina del Rio T."/>
            <person name="Dalin E."/>
            <person name="Tice H."/>
            <person name="Pitluck S."/>
            <person name="Clum A."/>
            <person name="Schmutz J."/>
            <person name="Larimer F."/>
            <person name="Land M."/>
            <person name="Hauser L."/>
            <person name="Kyrpides N."/>
            <person name="Anderson I."/>
            <person name="Sieprawska-Lupa M."/>
            <person name="Whitman W.B."/>
            <person name="Richardson P."/>
        </authorList>
    </citation>
    <scope>NUCLEOTIDE SEQUENCE [LARGE SCALE GENOMIC DNA]</scope>
    <source>
        <strain>C7 / ATCC BAA-1331</strain>
    </source>
</reference>
<keyword id="KW-0030">Aminoacyl-tRNA synthetase</keyword>
<keyword id="KW-0067">ATP-binding</keyword>
<keyword id="KW-0963">Cytoplasm</keyword>
<keyword id="KW-0436">Ligase</keyword>
<keyword id="KW-0547">Nucleotide-binding</keyword>
<keyword id="KW-0648">Protein biosynthesis</keyword>
<accession>A6VIK1</accession>